<dbReference type="EMBL" id="U28375">
    <property type="protein sequence ID" value="AAA83042.1"/>
    <property type="molecule type" value="Genomic_DNA"/>
</dbReference>
<dbReference type="EMBL" id="U00096">
    <property type="protein sequence ID" value="AAC75899.1"/>
    <property type="molecule type" value="Genomic_DNA"/>
</dbReference>
<dbReference type="EMBL" id="AP009048">
    <property type="protein sequence ID" value="BAE76927.1"/>
    <property type="molecule type" value="Genomic_DNA"/>
</dbReference>
<dbReference type="PIR" id="A64764">
    <property type="entry name" value="C65092"/>
</dbReference>
<dbReference type="RefSeq" id="NP_061399.1">
    <property type="nucleotide sequence ID" value="NC_002483.1"/>
</dbReference>
<dbReference type="RefSeq" id="NP_417337.1">
    <property type="nucleotide sequence ID" value="NC_000913.3"/>
</dbReference>
<dbReference type="RefSeq" id="YP_424823.1">
    <property type="nucleotide sequence ID" value="NC_007635.1"/>
</dbReference>
<dbReference type="SMR" id="P0CF56"/>
<dbReference type="FunCoup" id="P0CF56">
    <property type="interactions" value="6"/>
</dbReference>
<dbReference type="EnsemblBacteria" id="AAC75899">
    <property type="protein sequence ID" value="AAC75899"/>
    <property type="gene ID" value="b2860"/>
</dbReference>
<dbReference type="GeneID" id="947346"/>
<dbReference type="KEGG" id="ecj:JW2826"/>
<dbReference type="KEGG" id="eco:b0361"/>
<dbReference type="KEGG" id="eco:b1402"/>
<dbReference type="KEGG" id="eco:b1996"/>
<dbReference type="KEGG" id="eco:b2860"/>
<dbReference type="KEGG" id="eco:b3045"/>
<dbReference type="KEGG" id="eco:b4273"/>
<dbReference type="KEGG" id="ecoc:C3026_00665"/>
<dbReference type="KEGG" id="ecoc:C3026_03835"/>
<dbReference type="KEGG" id="ecoc:C3026_06240"/>
<dbReference type="KEGG" id="ecoc:C3026_08175"/>
<dbReference type="KEGG" id="ecoc:C3026_11260"/>
<dbReference type="KEGG" id="ecoc:C3026_15300"/>
<dbReference type="KEGG" id="ecoc:C3026_15695"/>
<dbReference type="KEGG" id="ecoc:C3026_16630"/>
<dbReference type="KEGG" id="ecoc:C3026_23045"/>
<dbReference type="KEGG" id="ecoc:C3026_24215"/>
<dbReference type="EchoBASE" id="EB4737"/>
<dbReference type="HOGENOM" id="CLU_052819_0_0_6"/>
<dbReference type="InParanoid" id="P0CF56"/>
<dbReference type="OMA" id="CHDREAI"/>
<dbReference type="PhylomeDB" id="P0CF56"/>
<dbReference type="BioCyc" id="EcoCyc:MONOMER0-4448"/>
<dbReference type="PRO" id="PR:P0CF56"/>
<dbReference type="Proteomes" id="UP000000625">
    <property type="component" value="Chromosome"/>
</dbReference>
<dbReference type="GO" id="GO:0003677">
    <property type="term" value="F:DNA binding"/>
    <property type="evidence" value="ECO:0007669"/>
    <property type="project" value="UniProtKB-KW"/>
</dbReference>
<dbReference type="GO" id="GO:0015074">
    <property type="term" value="P:DNA integration"/>
    <property type="evidence" value="ECO:0007669"/>
    <property type="project" value="InterPro"/>
</dbReference>
<dbReference type="GO" id="GO:0006310">
    <property type="term" value="P:DNA recombination"/>
    <property type="evidence" value="ECO:0007669"/>
    <property type="project" value="UniProtKB-KW"/>
</dbReference>
<dbReference type="GO" id="GO:0032196">
    <property type="term" value="P:transposition"/>
    <property type="evidence" value="ECO:0007669"/>
    <property type="project" value="UniProtKB-KW"/>
</dbReference>
<dbReference type="Gene3D" id="3.30.420.10">
    <property type="entry name" value="Ribonuclease H-like superfamily/Ribonuclease H"/>
    <property type="match status" value="1"/>
</dbReference>
<dbReference type="InterPro" id="IPR025948">
    <property type="entry name" value="HTH-like_dom"/>
</dbReference>
<dbReference type="InterPro" id="IPR001584">
    <property type="entry name" value="Integrase_cat-core"/>
</dbReference>
<dbReference type="InterPro" id="IPR012337">
    <property type="entry name" value="RNaseH-like_sf"/>
</dbReference>
<dbReference type="InterPro" id="IPR036397">
    <property type="entry name" value="RNaseH_sf"/>
</dbReference>
<dbReference type="InterPro" id="IPR048020">
    <property type="entry name" value="Transpos_IS3"/>
</dbReference>
<dbReference type="NCBIfam" id="NF006918">
    <property type="entry name" value="PRK09409.1"/>
    <property type="match status" value="1"/>
</dbReference>
<dbReference type="NCBIfam" id="NF033516">
    <property type="entry name" value="transpos_IS3"/>
    <property type="match status" value="1"/>
</dbReference>
<dbReference type="PANTHER" id="PTHR37936">
    <property type="entry name" value="TRANSPOSASE INSC FOR INSERTION ELEMENT IS2A-RELATED"/>
    <property type="match status" value="1"/>
</dbReference>
<dbReference type="PANTHER" id="PTHR37936:SF3">
    <property type="entry name" value="TRANSPOSASE INSC FOR INSERTION ELEMENT IS2A-RELATED"/>
    <property type="match status" value="1"/>
</dbReference>
<dbReference type="Pfam" id="PF13276">
    <property type="entry name" value="HTH_21"/>
    <property type="match status" value="1"/>
</dbReference>
<dbReference type="Pfam" id="PF00665">
    <property type="entry name" value="rve"/>
    <property type="match status" value="1"/>
</dbReference>
<dbReference type="SUPFAM" id="SSF53098">
    <property type="entry name" value="Ribonuclease H-like"/>
    <property type="match status" value="1"/>
</dbReference>
<dbReference type="PROSITE" id="PS50994">
    <property type="entry name" value="INTEGRASE"/>
    <property type="match status" value="1"/>
</dbReference>
<feature type="chain" id="PRO_0000393575" description="Transposase InsD for insertion element IS2H">
    <location>
        <begin position="1"/>
        <end position="301"/>
    </location>
</feature>
<feature type="domain" description="Integrase catalytic" evidence="1">
    <location>
        <begin position="106"/>
        <end position="289"/>
    </location>
</feature>
<evidence type="ECO:0000255" key="1">
    <source>
        <dbReference type="PROSITE-ProRule" id="PRU00457"/>
    </source>
</evidence>
<gene>
    <name type="primary">insD4</name>
    <name type="ordered locus">b2860</name>
    <name type="ordered locus">JW2826</name>
</gene>
<organism>
    <name type="scientific">Escherichia coli (strain K12)</name>
    <dbReference type="NCBI Taxonomy" id="83333"/>
    <lineage>
        <taxon>Bacteria</taxon>
        <taxon>Pseudomonadati</taxon>
        <taxon>Pseudomonadota</taxon>
        <taxon>Gammaproteobacteria</taxon>
        <taxon>Enterobacterales</taxon>
        <taxon>Enterobacteriaceae</taxon>
        <taxon>Escherichia</taxon>
    </lineage>
</organism>
<sequence>MDSARALIARGWGVSLVSRCLRVSRAQLHVILRRTDDWMDGRRSRHTDDTDVLLRIHHVIGELPTYGYRRVWALLRRQAELDGMPAINAKRVYRIMRQNALLLERKPAVPPSKRAHTGRVAVKESNQRWCSDGFEFCCDNGERLRVTFALDCCDREALHWAVTTGGFNSETVQDVMLGAVERRFGNDLPSSPVEWLTDNGSCYRANETRQFARMLGLEPKNTAVRSPESNGIAESFVKTIKRDYISIMPKPDGLTAAKNLAEAFEHYNEWHPHSALGYRSPREYLRQRACNGLSDNRCLEI</sequence>
<keyword id="KW-0233">DNA recombination</keyword>
<keyword id="KW-0238">DNA-binding</keyword>
<keyword id="KW-1185">Reference proteome</keyword>
<keyword id="KW-0814">Transposable element</keyword>
<keyword id="KW-0815">Transposition</keyword>
<accession>P0CF56</accession>
<accession>P0C5W4</accession>
<accession>P19777</accession>
<accession>P76167</accession>
<accession>P76916</accession>
<accession>P77033</accession>
<accession>Q79EJ0</accession>
<name>INSD4_ECOLI</name>
<proteinExistence type="predicted"/>
<comment type="function">
    <text>Involved in the transposition of the insertion sequence IS2.</text>
</comment>
<reference key="1">
    <citation type="journal article" date="1997" name="Science">
        <title>The complete genome sequence of Escherichia coli K-12.</title>
        <authorList>
            <person name="Blattner F.R."/>
            <person name="Plunkett G. III"/>
            <person name="Bloch C.A."/>
            <person name="Perna N.T."/>
            <person name="Burland V."/>
            <person name="Riley M."/>
            <person name="Collado-Vides J."/>
            <person name="Glasner J.D."/>
            <person name="Rode C.K."/>
            <person name="Mayhew G.F."/>
            <person name="Gregor J."/>
            <person name="Davis N.W."/>
            <person name="Kirkpatrick H.A."/>
            <person name="Goeden M.A."/>
            <person name="Rose D.J."/>
            <person name="Mau B."/>
            <person name="Shao Y."/>
        </authorList>
    </citation>
    <scope>NUCLEOTIDE SEQUENCE [LARGE SCALE GENOMIC DNA]</scope>
    <source>
        <strain>K12 / MG1655 / ATCC 47076</strain>
    </source>
</reference>
<reference key="2">
    <citation type="journal article" date="2006" name="Mol. Syst. Biol.">
        <title>Highly accurate genome sequences of Escherichia coli K-12 strains MG1655 and W3110.</title>
        <authorList>
            <person name="Hayashi K."/>
            <person name="Morooka N."/>
            <person name="Yamamoto Y."/>
            <person name="Fujita K."/>
            <person name="Isono K."/>
            <person name="Choi S."/>
            <person name="Ohtsubo E."/>
            <person name="Baba T."/>
            <person name="Wanner B.L."/>
            <person name="Mori H."/>
            <person name="Horiuchi T."/>
        </authorList>
    </citation>
    <scope>NUCLEOTIDE SEQUENCE [LARGE SCALE GENOMIC DNA]</scope>
    <source>
        <strain>K12 / W3110 / ATCC 27325 / DSM 5911</strain>
    </source>
</reference>
<protein>
    <recommendedName>
        <fullName>Transposase InsD for insertion element IS2H</fullName>
    </recommendedName>
</protein>